<comment type="similarity">
    <text evidence="1">Belongs to the bacterial ribosomal protein bL28 family.</text>
</comment>
<dbReference type="EMBL" id="FM209186">
    <property type="protein sequence ID" value="CAW30465.1"/>
    <property type="molecule type" value="Genomic_DNA"/>
</dbReference>
<dbReference type="RefSeq" id="WP_003096556.1">
    <property type="nucleotide sequence ID" value="NC_011770.1"/>
</dbReference>
<dbReference type="SMR" id="B7V5K7"/>
<dbReference type="GeneID" id="77223849"/>
<dbReference type="KEGG" id="pag:PLES_57111"/>
<dbReference type="HOGENOM" id="CLU_064548_3_1_6"/>
<dbReference type="GO" id="GO:0022625">
    <property type="term" value="C:cytosolic large ribosomal subunit"/>
    <property type="evidence" value="ECO:0007669"/>
    <property type="project" value="TreeGrafter"/>
</dbReference>
<dbReference type="GO" id="GO:0003735">
    <property type="term" value="F:structural constituent of ribosome"/>
    <property type="evidence" value="ECO:0007669"/>
    <property type="project" value="InterPro"/>
</dbReference>
<dbReference type="GO" id="GO:0006412">
    <property type="term" value="P:translation"/>
    <property type="evidence" value="ECO:0007669"/>
    <property type="project" value="UniProtKB-UniRule"/>
</dbReference>
<dbReference type="FunFam" id="2.30.170.40:FF:000001">
    <property type="entry name" value="50S ribosomal protein L28"/>
    <property type="match status" value="1"/>
</dbReference>
<dbReference type="Gene3D" id="2.30.170.40">
    <property type="entry name" value="Ribosomal protein L28/L24"/>
    <property type="match status" value="1"/>
</dbReference>
<dbReference type="HAMAP" id="MF_00373">
    <property type="entry name" value="Ribosomal_bL28"/>
    <property type="match status" value="1"/>
</dbReference>
<dbReference type="InterPro" id="IPR026569">
    <property type="entry name" value="Ribosomal_bL28"/>
</dbReference>
<dbReference type="InterPro" id="IPR034704">
    <property type="entry name" value="Ribosomal_bL28/bL31-like_sf"/>
</dbReference>
<dbReference type="InterPro" id="IPR001383">
    <property type="entry name" value="Ribosomal_bL28_bact-type"/>
</dbReference>
<dbReference type="InterPro" id="IPR037147">
    <property type="entry name" value="Ribosomal_bL28_sf"/>
</dbReference>
<dbReference type="NCBIfam" id="TIGR00009">
    <property type="entry name" value="L28"/>
    <property type="match status" value="1"/>
</dbReference>
<dbReference type="PANTHER" id="PTHR13528">
    <property type="entry name" value="39S RIBOSOMAL PROTEIN L28, MITOCHONDRIAL"/>
    <property type="match status" value="1"/>
</dbReference>
<dbReference type="PANTHER" id="PTHR13528:SF2">
    <property type="entry name" value="LARGE RIBOSOMAL SUBUNIT PROTEIN BL28M"/>
    <property type="match status" value="1"/>
</dbReference>
<dbReference type="Pfam" id="PF00830">
    <property type="entry name" value="Ribosomal_L28"/>
    <property type="match status" value="1"/>
</dbReference>
<dbReference type="SUPFAM" id="SSF143800">
    <property type="entry name" value="L28p-like"/>
    <property type="match status" value="1"/>
</dbReference>
<reference key="1">
    <citation type="journal article" date="2009" name="Genome Res.">
        <title>Newly introduced genomic prophage islands are critical determinants of in vivo competitiveness in the Liverpool epidemic strain of Pseudomonas aeruginosa.</title>
        <authorList>
            <person name="Winstanley C."/>
            <person name="Langille M.G.I."/>
            <person name="Fothergill J.L."/>
            <person name="Kukavica-Ibrulj I."/>
            <person name="Paradis-Bleau C."/>
            <person name="Sanschagrin F."/>
            <person name="Thomson N.R."/>
            <person name="Winsor G.L."/>
            <person name="Quail M.A."/>
            <person name="Lennard N."/>
            <person name="Bignell A."/>
            <person name="Clarke L."/>
            <person name="Seeger K."/>
            <person name="Saunders D."/>
            <person name="Harris D."/>
            <person name="Parkhill J."/>
            <person name="Hancock R.E.W."/>
            <person name="Brinkman F.S.L."/>
            <person name="Levesque R.C."/>
        </authorList>
    </citation>
    <scope>NUCLEOTIDE SEQUENCE [LARGE SCALE GENOMIC DNA]</scope>
    <source>
        <strain>LESB58</strain>
    </source>
</reference>
<protein>
    <recommendedName>
        <fullName evidence="1">Large ribosomal subunit protein bL28</fullName>
    </recommendedName>
    <alternativeName>
        <fullName evidence="2">50S ribosomal protein L28</fullName>
    </alternativeName>
</protein>
<accession>B7V5K7</accession>
<feature type="chain" id="PRO_1000121673" description="Large ribosomal subunit protein bL28">
    <location>
        <begin position="1"/>
        <end position="78"/>
    </location>
</feature>
<name>RL28_PSEA8</name>
<organism>
    <name type="scientific">Pseudomonas aeruginosa (strain LESB58)</name>
    <dbReference type="NCBI Taxonomy" id="557722"/>
    <lineage>
        <taxon>Bacteria</taxon>
        <taxon>Pseudomonadati</taxon>
        <taxon>Pseudomonadota</taxon>
        <taxon>Gammaproteobacteria</taxon>
        <taxon>Pseudomonadales</taxon>
        <taxon>Pseudomonadaceae</taxon>
        <taxon>Pseudomonas</taxon>
    </lineage>
</organism>
<keyword id="KW-0687">Ribonucleoprotein</keyword>
<keyword id="KW-0689">Ribosomal protein</keyword>
<evidence type="ECO:0000255" key="1">
    <source>
        <dbReference type="HAMAP-Rule" id="MF_00373"/>
    </source>
</evidence>
<evidence type="ECO:0000305" key="2"/>
<gene>
    <name evidence="1" type="primary">rpmB</name>
    <name type="ordered locus">PLES_57111</name>
</gene>
<proteinExistence type="inferred from homology"/>
<sequence length="78" mass="9066">MSRVCQVTGKGPVTGNNISHAHNKTRRRFLPNLQHHRFWVESEKRFVRLRVSAKGMRIIDKRGIEAVLADLRARGEKF</sequence>